<proteinExistence type="evidence at protein level"/>
<gene>
    <name evidence="7" type="primary">ago</name>
    <name evidence="9" type="ordered locus">Rsph17025_3694</name>
</gene>
<protein>
    <recommendedName>
        <fullName evidence="6">Protein argonaute</fullName>
        <shortName evidence="6">RsAgo</shortName>
    </recommendedName>
</protein>
<sequence length="777" mass="87090">MAPVQAADEMYDSNPHPDRRQLVSNGFEVNLPDQVEVIVRDLPDPSKVKEERTRLMGYWFVHWFDGKLFHLRIKAGGPNVDGEHRAIRTAEHPWLLRARLDDALEEALPKYAAVKKRPFTFLAQKDELIDAAATAAGLSHRLLNSFKVIPRFALSPKIYEPVDGTTRVGVFVTIGMRYDIEASLRDLLEAGIDLRGMYVVRRKRQPGERGLLGRVRAISDDMVQLFEETDLASVNVNDAKLEGSKENFTRCLSALLGHNYKKLLNALDDQEAGYRTGPRFDDAVRRMGEFLAKKPIRLADNINAQVGDRIVFSNEGQARNVRLAPKVEYVFDRTGAKSAEYAWRGLSQFGPFDRPSFANRSPRILVVYPSSTQGKVENFLSAFRDGMGSNYSGFSKGFVDLMGLTKVEFVMCPVEVSSADRNGAHTKYNSAIEDKLAGAGEVHAGIVVLFEDHARLPDDRNPYIHTKSLLLTLGVPTQQVRMPTVLLEPKSLQYTLQNFSIATYAKLNGTPWTVNHDKAINDELVVGMGLAELSGSRTEKRQRFVGITTVFAGDGSYLLGNVSKECEYEGYSDAIRESMTGILRELKKRNNWRPGDTVRVVFHAHRPLKRVDVASIVFECTREIGSDQNIQMAFVTVSHDHPFVLIDRSERGLEAYKGSTARKGVFAPPRGAISRVGRLTRLLAVNSPQLIKRANTPLPTPLLVSLHPDSTFKDVDYLAEQALKFTSLSWRSTLPAATPVTIFYSERIAELLGRLKSIPNWSSANLNIKLKWSRWFL</sequence>
<keyword id="KW-0002">3D-structure</keyword>
<keyword id="KW-0238">DNA-binding</keyword>
<keyword id="KW-0460">Magnesium</keyword>
<keyword id="KW-0479">Metal-binding</keyword>
<keyword id="KW-0614">Plasmid</keyword>
<keyword id="KW-0694">RNA-binding</keyword>
<name>AGO_CERS5</name>
<evidence type="ECO:0000255" key="1">
    <source>
        <dbReference type="PROSITE-ProRule" id="PRU00150"/>
    </source>
</evidence>
<evidence type="ECO:0000269" key="2">
    <source>
    </source>
</evidence>
<evidence type="ECO:0000269" key="3">
    <source>
    </source>
</evidence>
<evidence type="ECO:0000269" key="4">
    <source>
    </source>
</evidence>
<evidence type="ECO:0000269" key="5">
    <source>
    </source>
</evidence>
<evidence type="ECO:0000303" key="6">
    <source>
    </source>
</evidence>
<evidence type="ECO:0000305" key="7"/>
<evidence type="ECO:0000305" key="8">
    <source>
    </source>
</evidence>
<evidence type="ECO:0000312" key="9">
    <source>
        <dbReference type="EMBL" id="ABP72561.1"/>
    </source>
</evidence>
<evidence type="ECO:0000312" key="10">
    <source>
        <dbReference type="PDB" id="5AWH"/>
    </source>
</evidence>
<evidence type="ECO:0000312" key="11">
    <source>
        <dbReference type="PDB" id="6D8P"/>
    </source>
</evidence>
<evidence type="ECO:0000312" key="12">
    <source>
        <dbReference type="PDB" id="6D92"/>
    </source>
</evidence>
<evidence type="ECO:0000312" key="13">
    <source>
        <dbReference type="PDB" id="6D95"/>
    </source>
</evidence>
<evidence type="ECO:0000312" key="14">
    <source>
        <dbReference type="PDB" id="6D9K"/>
    </source>
</evidence>
<evidence type="ECO:0000312" key="15">
    <source>
        <dbReference type="PDB" id="6D9L"/>
    </source>
</evidence>
<evidence type="ECO:0007744" key="16">
    <source>
        <dbReference type="PDB" id="5AWH"/>
    </source>
</evidence>
<evidence type="ECO:0007744" key="17">
    <source>
        <dbReference type="PDB" id="6D8A"/>
    </source>
</evidence>
<evidence type="ECO:0007744" key="18">
    <source>
        <dbReference type="PDB" id="6D8F"/>
    </source>
</evidence>
<evidence type="ECO:0007829" key="19">
    <source>
        <dbReference type="PDB" id="6D8F"/>
    </source>
</evidence>
<evidence type="ECO:0007829" key="20">
    <source>
        <dbReference type="PDB" id="6D92"/>
    </source>
</evidence>
<feature type="chain" id="PRO_0000457785" description="Protein argonaute">
    <location>
        <begin position="1"/>
        <end position="777"/>
    </location>
</feature>
<feature type="domain" description="Piwi" evidence="1">
    <location>
        <begin position="445"/>
        <end position="757"/>
    </location>
</feature>
<feature type="region of interest" description="N-terminal domain" evidence="3">
    <location>
        <begin position="1"/>
        <end position="107"/>
    </location>
</feature>
<feature type="region of interest" description="Linker L1" evidence="3">
    <location>
        <begin position="108"/>
        <end position="182"/>
    </location>
</feature>
<feature type="region of interest" description="PAZ domain" evidence="3">
    <location>
        <begin position="183"/>
        <end position="243"/>
    </location>
</feature>
<feature type="region of interest" description="Linker L2" evidence="3">
    <location>
        <begin position="244"/>
        <end position="341"/>
    </location>
</feature>
<feature type="region of interest" description="Mid domain" evidence="3">
    <location>
        <begin position="342"/>
        <end position="509"/>
    </location>
</feature>
<feature type="region of interest" description="PIWI domain" evidence="3">
    <location>
        <begin position="510"/>
        <end position="777"/>
    </location>
</feature>
<feature type="binding site" evidence="3 4 10 11">
    <location>
        <position position="777"/>
    </location>
    <ligand>
        <name>Mg(2+)</name>
        <dbReference type="ChEBI" id="CHEBI:18420"/>
    </ligand>
</feature>
<feature type="mutagenesis site" description="9-fold reduction in plasmid silencing in E.coli, does not bind target DNA, binds guide RNA (gRNA)." evidence="3">
    <location>
        <begin position="45"/>
        <end position="63"/>
    </location>
</feature>
<feature type="mutagenesis site" description="4-fold reduction in plasmid silencing." evidence="3">
    <original>KEER</original>
    <variation>AEEA</variation>
    <location>
        <begin position="49"/>
        <end position="52"/>
    </location>
</feature>
<feature type="mutagenesis site" description="4-fold reduction in plasmid silencing." evidence="3">
    <original>RQPGER</original>
    <variation>AQPGEA</variation>
    <location>
        <begin position="204"/>
        <end position="209"/>
    </location>
</feature>
<feature type="mutagenesis site" description="10-fold reduction in plasmid silencing, strongly impairs gRNA binding." evidence="3">
    <original>YIHTK</original>
    <variation>AIHTA</variation>
    <location>
        <begin position="463"/>
        <end position="467"/>
    </location>
</feature>
<feature type="mutagenesis site" description="Does not bind small DNA or RNA in E.coli, increased plasmid transformation in E.coli (plasmid silencing)." evidence="2">
    <original>YIHTK</original>
    <variation>GIHTG</variation>
    <location>
        <begin position="463"/>
        <end position="467"/>
    </location>
</feature>
<feature type="mutagenesis site" description="9-fold reduction in plasmid silencing, strongly impairs gRNA binding." evidence="3">
    <original>RMPT</original>
    <variation>AMPA</variation>
    <location>
        <begin position="481"/>
        <end position="484"/>
    </location>
</feature>
<feature type="mutagenesis site" description="10-fold reduction in plasmid silencing, strongly impairs gRNA binding." evidence="3">
    <original>K</original>
    <variation>A</variation>
    <location>
        <position position="506"/>
    </location>
</feature>
<feature type="mutagenesis site" description="Does not reconstitute DNA cleavage; when associated with R-604-605-D and D-746." evidence="4">
    <original>G</original>
    <variation>D</variation>
    <location>
        <position position="529"/>
    </location>
</feature>
<feature type="mutagenesis site" description="Does not reconstitute DNA cleavage; when associated with D-529 and D-746." evidence="4">
    <original>AH</original>
    <variation>RD</variation>
    <location>
        <begin position="604"/>
        <end position="605"/>
    </location>
</feature>
<feature type="mutagenesis site" description="Does not reconstitute DNA cleavage; when associated with D-529 and R-604-605-D." evidence="4">
    <original>E</original>
    <variation>D</variation>
    <location>
        <position position="746"/>
    </location>
</feature>
<feature type="mutagenesis site" description="Increases affinity for 5'-phospho-U gRNA, no change in affinity for 5'-phospho-A or 5'-phospho-C gRNA." evidence="4">
    <original>R</original>
    <variation>A</variation>
    <location>
        <position position="754"/>
    </location>
</feature>
<feature type="mutagenesis site" description="10-fold reduction in plasmid silencing, impairs gRNA binding." evidence="3">
    <location>
        <position position="777"/>
    </location>
</feature>
<feature type="strand" evidence="20">
    <location>
        <begin position="21"/>
        <end position="30"/>
    </location>
</feature>
<feature type="strand" evidence="20">
    <location>
        <begin position="33"/>
        <end position="41"/>
    </location>
</feature>
<feature type="helix" evidence="20">
    <location>
        <begin position="45"/>
        <end position="47"/>
    </location>
</feature>
<feature type="helix" evidence="20">
    <location>
        <begin position="48"/>
        <end position="54"/>
    </location>
</feature>
<feature type="turn" evidence="20">
    <location>
        <begin position="55"/>
        <end position="58"/>
    </location>
</feature>
<feature type="strand" evidence="20">
    <location>
        <begin position="59"/>
        <end position="64"/>
    </location>
</feature>
<feature type="strand" evidence="20">
    <location>
        <begin position="67"/>
        <end position="72"/>
    </location>
</feature>
<feature type="strand" evidence="20">
    <location>
        <begin position="74"/>
        <end position="76"/>
    </location>
</feature>
<feature type="strand" evidence="20">
    <location>
        <begin position="82"/>
        <end position="88"/>
    </location>
</feature>
<feature type="turn" evidence="20">
    <location>
        <begin position="89"/>
        <end position="91"/>
    </location>
</feature>
<feature type="helix" evidence="20">
    <location>
        <begin position="94"/>
        <end position="106"/>
    </location>
</feature>
<feature type="strand" evidence="20">
    <location>
        <begin position="113"/>
        <end position="115"/>
    </location>
</feature>
<feature type="turn" evidence="20">
    <location>
        <begin position="116"/>
        <end position="118"/>
    </location>
</feature>
<feature type="strand" evidence="20">
    <location>
        <begin position="119"/>
        <end position="122"/>
    </location>
</feature>
<feature type="helix" evidence="20">
    <location>
        <begin position="128"/>
        <end position="136"/>
    </location>
</feature>
<feature type="helix" evidence="20">
    <location>
        <begin position="143"/>
        <end position="145"/>
    </location>
</feature>
<feature type="strand" evidence="20">
    <location>
        <begin position="146"/>
        <end position="162"/>
    </location>
</feature>
<feature type="strand" evidence="20">
    <location>
        <begin position="165"/>
        <end position="180"/>
    </location>
</feature>
<feature type="helix" evidence="20">
    <location>
        <begin position="184"/>
        <end position="189"/>
    </location>
</feature>
<feature type="strand" evidence="20">
    <location>
        <begin position="198"/>
        <end position="203"/>
    </location>
</feature>
<feature type="strand" evidence="20">
    <location>
        <begin position="211"/>
        <end position="218"/>
    </location>
</feature>
<feature type="strand" evidence="20">
    <location>
        <begin position="223"/>
        <end position="227"/>
    </location>
</feature>
<feature type="strand" evidence="20">
    <location>
        <begin position="232"/>
        <end position="234"/>
    </location>
</feature>
<feature type="helix" evidence="20">
    <location>
        <begin position="236"/>
        <end position="238"/>
    </location>
</feature>
<feature type="strand" evidence="20">
    <location>
        <begin position="239"/>
        <end position="241"/>
    </location>
</feature>
<feature type="helix" evidence="20">
    <location>
        <begin position="245"/>
        <end position="256"/>
    </location>
</feature>
<feature type="turn" evidence="20">
    <location>
        <begin position="257"/>
        <end position="259"/>
    </location>
</feature>
<feature type="helix" evidence="20">
    <location>
        <begin position="260"/>
        <end position="275"/>
    </location>
</feature>
<feature type="helix" evidence="20">
    <location>
        <begin position="277"/>
        <end position="292"/>
    </location>
</feature>
<feature type="strand" evidence="20">
    <location>
        <begin position="296"/>
        <end position="299"/>
    </location>
</feature>
<feature type="strand" evidence="20">
    <location>
        <begin position="302"/>
        <end position="313"/>
    </location>
</feature>
<feature type="strand" evidence="20">
    <location>
        <begin position="321"/>
        <end position="323"/>
    </location>
</feature>
<feature type="strand" evidence="20">
    <location>
        <begin position="332"/>
        <end position="335"/>
    </location>
</feature>
<feature type="strand" evidence="20">
    <location>
        <begin position="337"/>
        <end position="341"/>
    </location>
</feature>
<feature type="helix" evidence="20">
    <location>
        <begin position="342"/>
        <end position="349"/>
    </location>
</feature>
<feature type="turn" evidence="20">
    <location>
        <begin position="352"/>
        <end position="356"/>
    </location>
</feature>
<feature type="strand" evidence="20">
    <location>
        <begin position="363"/>
        <end position="369"/>
    </location>
</feature>
<feature type="helix" evidence="20">
    <location>
        <begin position="370"/>
        <end position="372"/>
    </location>
</feature>
<feature type="helix" evidence="20">
    <location>
        <begin position="373"/>
        <end position="385"/>
    </location>
</feature>
<feature type="helix" evidence="20">
    <location>
        <begin position="392"/>
        <end position="394"/>
    </location>
</feature>
<feature type="helix" evidence="20">
    <location>
        <begin position="398"/>
        <end position="402"/>
    </location>
</feature>
<feature type="strand" evidence="20">
    <location>
        <begin position="408"/>
        <end position="414"/>
    </location>
</feature>
<feature type="helix" evidence="20">
    <location>
        <begin position="424"/>
        <end position="437"/>
    </location>
</feature>
<feature type="strand" evidence="20">
    <location>
        <begin position="443"/>
        <end position="449"/>
    </location>
</feature>
<feature type="helix" evidence="20">
    <location>
        <begin position="451"/>
        <end position="454"/>
    </location>
</feature>
<feature type="helix" evidence="20">
    <location>
        <begin position="458"/>
        <end position="460"/>
    </location>
</feature>
<feature type="helix" evidence="20">
    <location>
        <begin position="462"/>
        <end position="472"/>
    </location>
</feature>
<feature type="strand" evidence="20">
    <location>
        <begin position="477"/>
        <end position="481"/>
    </location>
</feature>
<feature type="helix" evidence="20">
    <location>
        <begin position="482"/>
        <end position="485"/>
    </location>
</feature>
<feature type="helix" evidence="20">
    <location>
        <begin position="489"/>
        <end position="506"/>
    </location>
</feature>
<feature type="strand" evidence="20">
    <location>
        <begin position="513"/>
        <end position="515"/>
    </location>
</feature>
<feature type="strand" evidence="20">
    <location>
        <begin position="520"/>
        <end position="533"/>
    </location>
</feature>
<feature type="strand" evidence="19">
    <location>
        <begin position="535"/>
        <end position="539"/>
    </location>
</feature>
<feature type="strand" evidence="20">
    <location>
        <begin position="542"/>
        <end position="552"/>
    </location>
</feature>
<feature type="strand" evidence="20">
    <location>
        <begin position="554"/>
        <end position="562"/>
    </location>
</feature>
<feature type="helix" evidence="20">
    <location>
        <begin position="571"/>
        <end position="590"/>
    </location>
</feature>
<feature type="strand" evidence="20">
    <location>
        <begin position="597"/>
        <end position="606"/>
    </location>
</feature>
<feature type="helix" evidence="20">
    <location>
        <begin position="610"/>
        <end position="624"/>
    </location>
</feature>
<feature type="strand" evidence="20">
    <location>
        <begin position="628"/>
        <end position="642"/>
    </location>
</feature>
<feature type="strand" evidence="20">
    <location>
        <begin position="653"/>
        <end position="656"/>
    </location>
</feature>
<feature type="strand" evidence="20">
    <location>
        <begin position="662"/>
        <end position="664"/>
    </location>
</feature>
<feature type="strand" evidence="20">
    <location>
        <begin position="672"/>
        <end position="677"/>
    </location>
</feature>
<feature type="strand" evidence="20">
    <location>
        <begin position="680"/>
        <end position="683"/>
    </location>
</feature>
<feature type="turn" evidence="20">
    <location>
        <begin position="688"/>
        <end position="690"/>
    </location>
</feature>
<feature type="strand" evidence="20">
    <location>
        <begin position="702"/>
        <end position="706"/>
    </location>
</feature>
<feature type="helix" evidence="20">
    <location>
        <begin position="715"/>
        <end position="726"/>
    </location>
</feature>
<feature type="helix" evidence="20">
    <location>
        <begin position="740"/>
        <end position="755"/>
    </location>
</feature>
<feature type="helix" evidence="20">
    <location>
        <begin position="763"/>
        <end position="765"/>
    </location>
</feature>
<feature type="turn" evidence="20">
    <location>
        <begin position="766"/>
        <end position="772"/>
    </location>
</feature>
<accession>A4WYU7</accession>
<comment type="function">
    <text evidence="2 3 4 5">A catalytically inactive argonaute protein. Binds 5'-phosphorylated RNA as the guide (gRNA) and short DNA as target DNA (tDNA); does not bind other nucleic acid combinations, does not bind tDNA alone (PubMed:27325485, PubMed:29996105, PubMed:33333714). Has highest affinity for gRNA that begins with 5'-phospho-U and poor affinity for gRNA with 5'-OH (PubMed:27325485, PubMed:29996105). Upon expression in E.coli, plasmid sequences are found in RsAgo, its induction leads to plasmid degradation and suppression of genes encoded on foreign plasmids, suggesting it may also interfere with transcription (PubMed:24034694, PubMed:27325485). Does not interact with preformed gRNA:tDNA duplexes. Mismatches and nt bulges are tolerated in the ternary complex, however, they significantly reduce the affinity of RsAgo:gRNA for tDNA. Mismatched tDNA can cause dissociation of gRNA from RsAgo (PubMed:29996105). In situ binds 2 populations of RNA (15-19 and 45 nucleotides, nt) and a population of ssDNA 22-24 nt in length. The small sense RNA is probably derived from mRNA degradation and strongly enriched for U in the first and U/C in the second positions. The small DNA is enriched for sequences complementary to the RNA, with 3 nt overhangs on both ends; another nuclease may trim the ends. The sequences are largely derived from exogenous plasmids or genome-encoded foreign elements such as prophages and transposons (PubMed:24034694). Forms a ternary complex with gRNA and double-stranded tDNA only when the tDNA is open (PubMed:33333714).</text>
</comment>
<comment type="cofactor">
    <cofactor evidence="3">
        <name>Mg(2+)</name>
        <dbReference type="ChEBI" id="CHEBI:18420"/>
    </cofactor>
    <text evidence="3">Mg(2+) contributes to binding the 5'-end of the gRNA.</text>
</comment>
<comment type="domain">
    <text evidence="3 4">Has 4 domains (N-terminal, PAZ, Mid and PIWI). The N-terminal and PAZ domains are joined by linker L1, the PAZ and Mid domains are joined by linker L2. The domains assemble in 2 lobes; the PAZ lobe consists of the N-terminal, L1, PAZ and L2 domains, while the PIWI lobe has the Mid and PIWI domains. The PIWI domain assumes an RNase H fold but in this bacteria does not have catalytic activities. The gRNA:tDNA duplex lies between the 2 lobes. The 5'-phosphate and first base of the gRNA bind in the Mid domain, the middle of the gRNA binds to the PAZ domain, while the 3'-region of the gRNA strand base-pairs with the 5'-region of the tDNA strand but not to the PAZ domain. The 5'-region of the tDNA strand binds to RsAgo N-terminal domain in the heteroduplex.</text>
</comment>
<comment type="disruption phenotype">
    <text evidence="2">No visible growth phenotype. Cells no longer have a 15-19 nt population of RNA, transforms 2-fold better with plasmid (plasmid silencing).</text>
</comment>
<comment type="miscellaneous">
    <text evidence="4 8">Argonaute in this bacteria does not have endonuclease activity as the catalytic residues are not conserved, however a nuclease is encoded nearby in the genome (Probable). Restoring the catalytic residues to those conserved in T.thermophilus (G529D, AH604-605RD and E746D) does not reconstitute tDNA cleavage (PubMed:29996105).</text>
</comment>
<comment type="similarity">
    <text evidence="7">Belongs to the argonaute family. Long pAgo subfamily.</text>
</comment>
<geneLocation type="plasmid">
    <name>pRSPA01</name>
</geneLocation>
<reference evidence="9" key="1">
    <citation type="submission" date="2007-04" db="EMBL/GenBank/DDBJ databases">
        <title>Complete sequence of plasmid pRSPA01 of Rhodobacter sphaeroides ATCC 17025.</title>
        <authorList>
            <consortium name="US DOE Joint Genome Institute"/>
            <person name="Copeland A."/>
            <person name="Lucas S."/>
            <person name="Lapidus A."/>
            <person name="Barry K."/>
            <person name="Detter J.C."/>
            <person name="Glavina del Rio T."/>
            <person name="Hammon N."/>
            <person name="Israni S."/>
            <person name="Dalin E."/>
            <person name="Tice H."/>
            <person name="Pitluck S."/>
            <person name="Chertkov O."/>
            <person name="Brettin T."/>
            <person name="Bruce D."/>
            <person name="Han C."/>
            <person name="Schmutz J."/>
            <person name="Larimer F."/>
            <person name="Land M."/>
            <person name="Hauser L."/>
            <person name="Kyrpides N."/>
            <person name="Kim E."/>
            <person name="Richardson P."/>
            <person name="Mackenzie C."/>
            <person name="Choudhary M."/>
            <person name="Donohue T.J."/>
            <person name="Kaplan S."/>
        </authorList>
    </citation>
    <scope>NUCLEOTIDE SEQUENCE [LARGE SCALE GENOMIC DNA]</scope>
    <source>
        <strain>ATCC 17025 / ATH 2.4.3</strain>
        <plasmid>pRSPA01</plasmid>
    </source>
</reference>
<reference key="2">
    <citation type="journal article" date="2013" name="Mol. Cell">
        <title>Bacterial argonaute samples the transcriptome to identify foreign DNA.</title>
        <authorList>
            <person name="Olovnikov I."/>
            <person name="Chan K."/>
            <person name="Sachidanandam R."/>
            <person name="Newman D.K."/>
            <person name="Aravin A.A."/>
        </authorList>
    </citation>
    <scope>FUNCTION</scope>
    <scope>NUCLEIC ACID-BINDING</scope>
    <scope>DISRUPTION PHENOTYPE</scope>
    <scope>MUTAGENESIS OF 463-TYR--LYS-467</scope>
    <source>
        <strain>ATCC 17025 / ATH 2.4.3</strain>
    </source>
</reference>
<reference key="3">
    <citation type="journal article" date="2020" name="Biochem. Biophys. Res. Commun.">
        <title>Recognition of double-stranded DNA by the Rhodobacter sphaeroides Argonaute protein.</title>
        <authorList>
            <person name="Lisitskaya L."/>
            <person name="Petushkov I."/>
            <person name="Esyunina D."/>
            <person name="Aravin A."/>
            <person name="Kulbachinskiy A."/>
        </authorList>
    </citation>
    <scope>FUNCTION</scope>
    <scope>NUCLEIC ACID-BINDING</scope>
</reference>
<reference evidence="16" key="4">
    <citation type="journal article" date="2016" name="Nat. Commun.">
        <title>Structural basis for the recognition of guide RNA and target DNA heteroduplex by Argonaute.</title>
        <authorList>
            <person name="Miyoshi T."/>
            <person name="Ito K."/>
            <person name="Murakami R."/>
            <person name="Uchiumi T."/>
        </authorList>
    </citation>
    <scope>X-RAY CRYSTALLOGRAPHY (2.00 ANGSTROMS) OF 21-777 IN COMPLEX WITH GUIDE RNA:TARGET DNA DUPLEX AND MAGNESIUM</scope>
    <scope>NUCLEIC ACID-BINDING</scope>
    <scope>FUNCTION</scope>
    <scope>COFACTOR</scope>
    <scope>DOMAIN</scope>
    <scope>MUTAGENESIS OF 45-PRO--TRP-63; 49-LYS--ARG-52; 204-ARG--ARG-209; 463-TYR--LYS-467; 481-ARG--THR-484; LYS-506 AND LEU-777</scope>
    <source>
        <strain>ATCC 17025 / ATH 2.4.3</strain>
    </source>
</reference>
<reference evidence="11 12 13 14 15 17 18" key="5">
    <citation type="journal article" date="2018" name="Cell Rep.">
        <title>Accommodation of Helical Imperfections in Rhodobacter sphaeroides Argonaute Ternary Complexes with Guide RNA and Target DNA.</title>
        <authorList>
            <person name="Liu Y."/>
            <person name="Esyunina D."/>
            <person name="Olovnikov I."/>
            <person name="Teplova M."/>
            <person name="Kulbachinskiy A."/>
            <person name="Aravin A.A."/>
            <person name="Patel D.J."/>
        </authorList>
    </citation>
    <scope>X-RAY CRYSTALLOGRAPHY (1.81 ANGSTROMS) OF 2-777 IN COMPLEX WITH GUIDE RNA:TARGET DNA DUPLEXES AND MAGNESIUM</scope>
    <scope>FUNCTION</scope>
    <scope>DOMAIN</scope>
    <scope>MUTAGENESIS OF GLY-529; 604-ALA-HIS-605; GLU-746 AND ARG-754</scope>
    <source>
        <strain>ATCC 17025 / ATH 2.4.3</strain>
    </source>
</reference>
<dbReference type="EMBL" id="CP000662">
    <property type="protein sequence ID" value="ABP72561.1"/>
    <property type="molecule type" value="Genomic_DNA"/>
</dbReference>
<dbReference type="PDB" id="5AWH">
    <property type="method" value="X-ray"/>
    <property type="resolution" value="2.00 A"/>
    <property type="chains" value="A/B=21-777"/>
</dbReference>
<dbReference type="PDB" id="6D8A">
    <property type="method" value="X-ray"/>
    <property type="resolution" value="2.25 A"/>
    <property type="chains" value="A/F=2-777"/>
</dbReference>
<dbReference type="PDB" id="6D8F">
    <property type="method" value="X-ray"/>
    <property type="resolution" value="2.15 A"/>
    <property type="chains" value="A/F=2-777"/>
</dbReference>
<dbReference type="PDB" id="6D8P">
    <property type="method" value="X-ray"/>
    <property type="resolution" value="2.10 A"/>
    <property type="chains" value="A/B=2-777"/>
</dbReference>
<dbReference type="PDB" id="6D92">
    <property type="method" value="X-ray"/>
    <property type="resolution" value="1.81 A"/>
    <property type="chains" value="A/F=2-777"/>
</dbReference>
<dbReference type="PDB" id="6D95">
    <property type="method" value="X-ray"/>
    <property type="resolution" value="1.85 A"/>
    <property type="chains" value="A/F=20-777"/>
</dbReference>
<dbReference type="PDB" id="6D9K">
    <property type="method" value="X-ray"/>
    <property type="resolution" value="2.00 A"/>
    <property type="chains" value="A/F=2-777"/>
</dbReference>
<dbReference type="PDB" id="6D9L">
    <property type="method" value="X-ray"/>
    <property type="resolution" value="2.60 A"/>
    <property type="chains" value="A/F=2-777"/>
</dbReference>
<dbReference type="PDBsum" id="5AWH"/>
<dbReference type="PDBsum" id="6D8A"/>
<dbReference type="PDBsum" id="6D8F"/>
<dbReference type="PDBsum" id="6D8P"/>
<dbReference type="PDBsum" id="6D92"/>
<dbReference type="PDBsum" id="6D95"/>
<dbReference type="PDBsum" id="6D9K"/>
<dbReference type="PDBsum" id="6D9L"/>
<dbReference type="SMR" id="A4WYU7"/>
<dbReference type="KEGG" id="rsq:Rsph17025_3694"/>
<dbReference type="HOGENOM" id="CLU_368286_0_0_5"/>
<dbReference type="BioCyc" id="RSPH349102:G1G8M-3808-MONOMER"/>
<dbReference type="GO" id="GO:0003677">
    <property type="term" value="F:DNA binding"/>
    <property type="evidence" value="ECO:0007669"/>
    <property type="project" value="UniProtKB-KW"/>
</dbReference>
<dbReference type="GO" id="GO:0046872">
    <property type="term" value="F:metal ion binding"/>
    <property type="evidence" value="ECO:0007669"/>
    <property type="project" value="UniProtKB-KW"/>
</dbReference>
<dbReference type="GO" id="GO:0003723">
    <property type="term" value="F:RNA binding"/>
    <property type="evidence" value="ECO:0007669"/>
    <property type="project" value="UniProtKB-KW"/>
</dbReference>
<dbReference type="GO" id="GO:0044355">
    <property type="term" value="P:clearance of foreign intracellular DNA"/>
    <property type="evidence" value="ECO:0000315"/>
    <property type="project" value="UniProtKB"/>
</dbReference>
<dbReference type="CDD" id="cd04659">
    <property type="entry name" value="Piwi_piwi-like_ProArk"/>
    <property type="match status" value="1"/>
</dbReference>
<dbReference type="Gene3D" id="3.40.50.2300">
    <property type="match status" value="1"/>
</dbReference>
<dbReference type="Gene3D" id="3.30.420.10">
    <property type="entry name" value="Ribonuclease H-like superfamily/Ribonuclease H"/>
    <property type="match status" value="1"/>
</dbReference>
<dbReference type="InterPro" id="IPR003165">
    <property type="entry name" value="Piwi"/>
</dbReference>
<dbReference type="InterPro" id="IPR012337">
    <property type="entry name" value="RNaseH-like_sf"/>
</dbReference>
<dbReference type="InterPro" id="IPR036397">
    <property type="entry name" value="RNaseH_sf"/>
</dbReference>
<dbReference type="Pfam" id="PF02171">
    <property type="entry name" value="Piwi"/>
    <property type="match status" value="1"/>
</dbReference>
<dbReference type="SMART" id="SM00950">
    <property type="entry name" value="Piwi"/>
    <property type="match status" value="1"/>
</dbReference>
<dbReference type="SUPFAM" id="SSF53098">
    <property type="entry name" value="Ribonuclease H-like"/>
    <property type="match status" value="1"/>
</dbReference>
<dbReference type="PROSITE" id="PS50822">
    <property type="entry name" value="PIWI"/>
    <property type="match status" value="1"/>
</dbReference>
<organism>
    <name type="scientific">Cereibacter sphaeroides (strain ATCC 17025 / ATH 2.4.3)</name>
    <name type="common">Rhodobacter sphaeroides</name>
    <dbReference type="NCBI Taxonomy" id="349102"/>
    <lineage>
        <taxon>Bacteria</taxon>
        <taxon>Pseudomonadati</taxon>
        <taxon>Pseudomonadota</taxon>
        <taxon>Alphaproteobacteria</taxon>
        <taxon>Rhodobacterales</taxon>
        <taxon>Paracoccaceae</taxon>
        <taxon>Cereibacter</taxon>
    </lineage>
</organism>